<reference key="1">
    <citation type="journal article" date="2010" name="PLoS ONE">
        <title>The complete genome sequence of Cupriavidus metallidurans strain CH34, a master survivalist in harsh and anthropogenic environments.</title>
        <authorList>
            <person name="Janssen P.J."/>
            <person name="Van Houdt R."/>
            <person name="Moors H."/>
            <person name="Monsieurs P."/>
            <person name="Morin N."/>
            <person name="Michaux A."/>
            <person name="Benotmane M.A."/>
            <person name="Leys N."/>
            <person name="Vallaeys T."/>
            <person name="Lapidus A."/>
            <person name="Monchy S."/>
            <person name="Medigue C."/>
            <person name="Taghavi S."/>
            <person name="McCorkle S."/>
            <person name="Dunn J."/>
            <person name="van der Lelie D."/>
            <person name="Mergeay M."/>
        </authorList>
    </citation>
    <scope>NUCLEOTIDE SEQUENCE [LARGE SCALE GENOMIC DNA]</scope>
    <source>
        <strain>ATCC 43123 / DSM 2839 / NBRC 102507 / CH34</strain>
    </source>
</reference>
<sequence>MFGVLQKPHVLVLGLGESGLAMARWCGLNGCRVRVADTREAPANLVFLQAELTTAQFMGGQFTENLLDDIGLVAISPGLSPLEPNTRALLEAAQARSIPVWGEIELFAQAIGYLEATSGYAPRVLAITGTNGKTTTTALTGRLIERAGKTVGVAGNISPSALDKLSACIASATLPDVWVLELSSFQLEYTFSLAPHAATVLNVTQDHLDWHGSMEAYAAAKARIFGPAEKGCLQVLNRQDPLTMNMARRGTTLVTFGTDLPETPGSYGVLREGGMPWLVLAEPDTEADAEQKPRRRKKDDVAADAVVPVRHKRLMPADALHIRGMHNATNAMAALALCRAIDLPLNALLHGLREYRGEPHRVEWVATIDEVEYFDDSKGTNVGATVAALSGLDKHVVLIAGGEGKGQDFSPLVAPVAQYARAVVLIGKDAGALREALGATGKPLIDAGSLEEAVEKSASLAEAGDVVLLSPACASLDMFRNYVHRAQVFRGAVEELALSRGIMP</sequence>
<proteinExistence type="inferred from homology"/>
<name>MURD_CUPMC</name>
<gene>
    <name evidence="1" type="primary">murD</name>
    <name type="ordered locus">Rmet_3130</name>
</gene>
<evidence type="ECO:0000255" key="1">
    <source>
        <dbReference type="HAMAP-Rule" id="MF_00639"/>
    </source>
</evidence>
<feature type="chain" id="PRO_0000257222" description="UDP-N-acetylmuramoylalanine--D-glutamate ligase">
    <location>
        <begin position="1"/>
        <end position="504"/>
    </location>
</feature>
<feature type="binding site" evidence="1">
    <location>
        <begin position="129"/>
        <end position="135"/>
    </location>
    <ligand>
        <name>ATP</name>
        <dbReference type="ChEBI" id="CHEBI:30616"/>
    </ligand>
</feature>
<comment type="function">
    <text evidence="1">Cell wall formation. Catalyzes the addition of glutamate to the nucleotide precursor UDP-N-acetylmuramoyl-L-alanine (UMA).</text>
</comment>
<comment type="catalytic activity">
    <reaction evidence="1">
        <text>UDP-N-acetyl-alpha-D-muramoyl-L-alanine + D-glutamate + ATP = UDP-N-acetyl-alpha-D-muramoyl-L-alanyl-D-glutamate + ADP + phosphate + H(+)</text>
        <dbReference type="Rhea" id="RHEA:16429"/>
        <dbReference type="ChEBI" id="CHEBI:15378"/>
        <dbReference type="ChEBI" id="CHEBI:29986"/>
        <dbReference type="ChEBI" id="CHEBI:30616"/>
        <dbReference type="ChEBI" id="CHEBI:43474"/>
        <dbReference type="ChEBI" id="CHEBI:83898"/>
        <dbReference type="ChEBI" id="CHEBI:83900"/>
        <dbReference type="ChEBI" id="CHEBI:456216"/>
        <dbReference type="EC" id="6.3.2.9"/>
    </reaction>
</comment>
<comment type="pathway">
    <text evidence="1">Cell wall biogenesis; peptidoglycan biosynthesis.</text>
</comment>
<comment type="subcellular location">
    <subcellularLocation>
        <location evidence="1">Cytoplasm</location>
    </subcellularLocation>
</comment>
<comment type="similarity">
    <text evidence="1">Belongs to the MurCDEF family.</text>
</comment>
<keyword id="KW-0067">ATP-binding</keyword>
<keyword id="KW-0131">Cell cycle</keyword>
<keyword id="KW-0132">Cell division</keyword>
<keyword id="KW-0133">Cell shape</keyword>
<keyword id="KW-0961">Cell wall biogenesis/degradation</keyword>
<keyword id="KW-0963">Cytoplasm</keyword>
<keyword id="KW-0436">Ligase</keyword>
<keyword id="KW-0547">Nucleotide-binding</keyword>
<keyword id="KW-0573">Peptidoglycan synthesis</keyword>
<keyword id="KW-1185">Reference proteome</keyword>
<accession>Q1LIM4</accession>
<organism>
    <name type="scientific">Cupriavidus metallidurans (strain ATCC 43123 / DSM 2839 / NBRC 102507 / CH34)</name>
    <name type="common">Ralstonia metallidurans</name>
    <dbReference type="NCBI Taxonomy" id="266264"/>
    <lineage>
        <taxon>Bacteria</taxon>
        <taxon>Pseudomonadati</taxon>
        <taxon>Pseudomonadota</taxon>
        <taxon>Betaproteobacteria</taxon>
        <taxon>Burkholderiales</taxon>
        <taxon>Burkholderiaceae</taxon>
        <taxon>Cupriavidus</taxon>
    </lineage>
</organism>
<dbReference type="EC" id="6.3.2.9" evidence="1"/>
<dbReference type="EMBL" id="CP000352">
    <property type="protein sequence ID" value="ABF10002.1"/>
    <property type="molecule type" value="Genomic_DNA"/>
</dbReference>
<dbReference type="RefSeq" id="WP_011517621.1">
    <property type="nucleotide sequence ID" value="NC_007973.1"/>
</dbReference>
<dbReference type="SMR" id="Q1LIM4"/>
<dbReference type="STRING" id="266264.Rmet_3130"/>
<dbReference type="KEGG" id="rme:Rmet_3130"/>
<dbReference type="eggNOG" id="COG0771">
    <property type="taxonomic scope" value="Bacteria"/>
</dbReference>
<dbReference type="HOGENOM" id="CLU_032540_1_1_4"/>
<dbReference type="UniPathway" id="UPA00219"/>
<dbReference type="Proteomes" id="UP000002429">
    <property type="component" value="Chromosome"/>
</dbReference>
<dbReference type="GO" id="GO:0005737">
    <property type="term" value="C:cytoplasm"/>
    <property type="evidence" value="ECO:0007669"/>
    <property type="project" value="UniProtKB-SubCell"/>
</dbReference>
<dbReference type="GO" id="GO:0005524">
    <property type="term" value="F:ATP binding"/>
    <property type="evidence" value="ECO:0007669"/>
    <property type="project" value="UniProtKB-UniRule"/>
</dbReference>
<dbReference type="GO" id="GO:0004326">
    <property type="term" value="F:tetrahydrofolylpolyglutamate synthase activity"/>
    <property type="evidence" value="ECO:0007669"/>
    <property type="project" value="InterPro"/>
</dbReference>
<dbReference type="GO" id="GO:0008764">
    <property type="term" value="F:UDP-N-acetylmuramoylalanine-D-glutamate ligase activity"/>
    <property type="evidence" value="ECO:0007669"/>
    <property type="project" value="UniProtKB-UniRule"/>
</dbReference>
<dbReference type="GO" id="GO:0051301">
    <property type="term" value="P:cell division"/>
    <property type="evidence" value="ECO:0007669"/>
    <property type="project" value="UniProtKB-KW"/>
</dbReference>
<dbReference type="GO" id="GO:0071555">
    <property type="term" value="P:cell wall organization"/>
    <property type="evidence" value="ECO:0007669"/>
    <property type="project" value="UniProtKB-KW"/>
</dbReference>
<dbReference type="GO" id="GO:0009252">
    <property type="term" value="P:peptidoglycan biosynthetic process"/>
    <property type="evidence" value="ECO:0007669"/>
    <property type="project" value="UniProtKB-UniRule"/>
</dbReference>
<dbReference type="GO" id="GO:0008360">
    <property type="term" value="P:regulation of cell shape"/>
    <property type="evidence" value="ECO:0007669"/>
    <property type="project" value="UniProtKB-KW"/>
</dbReference>
<dbReference type="Gene3D" id="3.90.190.20">
    <property type="entry name" value="Mur ligase, C-terminal domain"/>
    <property type="match status" value="1"/>
</dbReference>
<dbReference type="Gene3D" id="3.40.1190.10">
    <property type="entry name" value="Mur-like, catalytic domain"/>
    <property type="match status" value="1"/>
</dbReference>
<dbReference type="Gene3D" id="3.40.50.720">
    <property type="entry name" value="NAD(P)-binding Rossmann-like Domain"/>
    <property type="match status" value="1"/>
</dbReference>
<dbReference type="HAMAP" id="MF_00639">
    <property type="entry name" value="MurD"/>
    <property type="match status" value="1"/>
</dbReference>
<dbReference type="InterPro" id="IPR018109">
    <property type="entry name" value="Folylpolyglutamate_synth_CS"/>
</dbReference>
<dbReference type="InterPro" id="IPR036565">
    <property type="entry name" value="Mur-like_cat_sf"/>
</dbReference>
<dbReference type="InterPro" id="IPR004101">
    <property type="entry name" value="Mur_ligase_C"/>
</dbReference>
<dbReference type="InterPro" id="IPR036615">
    <property type="entry name" value="Mur_ligase_C_dom_sf"/>
</dbReference>
<dbReference type="InterPro" id="IPR013221">
    <property type="entry name" value="Mur_ligase_cen"/>
</dbReference>
<dbReference type="InterPro" id="IPR005762">
    <property type="entry name" value="MurD"/>
</dbReference>
<dbReference type="NCBIfam" id="TIGR01087">
    <property type="entry name" value="murD"/>
    <property type="match status" value="1"/>
</dbReference>
<dbReference type="PANTHER" id="PTHR43692">
    <property type="entry name" value="UDP-N-ACETYLMURAMOYLALANINE--D-GLUTAMATE LIGASE"/>
    <property type="match status" value="1"/>
</dbReference>
<dbReference type="PANTHER" id="PTHR43692:SF1">
    <property type="entry name" value="UDP-N-ACETYLMURAMOYLALANINE--D-GLUTAMATE LIGASE"/>
    <property type="match status" value="1"/>
</dbReference>
<dbReference type="Pfam" id="PF02875">
    <property type="entry name" value="Mur_ligase_C"/>
    <property type="match status" value="1"/>
</dbReference>
<dbReference type="Pfam" id="PF08245">
    <property type="entry name" value="Mur_ligase_M"/>
    <property type="match status" value="1"/>
</dbReference>
<dbReference type="Pfam" id="PF21799">
    <property type="entry name" value="MurD-like_N"/>
    <property type="match status" value="1"/>
</dbReference>
<dbReference type="SUPFAM" id="SSF51984">
    <property type="entry name" value="MurCD N-terminal domain"/>
    <property type="match status" value="1"/>
</dbReference>
<dbReference type="SUPFAM" id="SSF53623">
    <property type="entry name" value="MurD-like peptide ligases, catalytic domain"/>
    <property type="match status" value="1"/>
</dbReference>
<dbReference type="SUPFAM" id="SSF53244">
    <property type="entry name" value="MurD-like peptide ligases, peptide-binding domain"/>
    <property type="match status" value="1"/>
</dbReference>
<protein>
    <recommendedName>
        <fullName evidence="1">UDP-N-acetylmuramoylalanine--D-glutamate ligase</fullName>
        <ecNumber evidence="1">6.3.2.9</ecNumber>
    </recommendedName>
    <alternativeName>
        <fullName evidence="1">D-glutamic acid-adding enzyme</fullName>
    </alternativeName>
    <alternativeName>
        <fullName evidence="1">UDP-N-acetylmuramoyl-L-alanyl-D-glutamate synthetase</fullName>
    </alternativeName>
</protein>